<organism>
    <name type="scientific">Chlamydomonas moewusii</name>
    <name type="common">Chlamydomonas eugametos</name>
    <dbReference type="NCBI Taxonomy" id="3054"/>
    <lineage>
        <taxon>Eukaryota</taxon>
        <taxon>Viridiplantae</taxon>
        <taxon>Chlorophyta</taxon>
        <taxon>core chlorophytes</taxon>
        <taxon>Chlorophyceae</taxon>
        <taxon>CS clade</taxon>
        <taxon>Chlamydomonadales</taxon>
        <taxon>Chlamydomonadaceae</taxon>
        <taxon>Chlamydomonas</taxon>
    </lineage>
</organism>
<sequence>MKLAYWMYAGPAHIGTLRVASSFKNVHAIMHAPLGDDYFNVMRSMLERERDFTPVTTSIVDRHVLARGSQEKVVENITRKDNEESPDLIILTPTCTSSILQEDLQNFVNRASMSENSTSDVLLADVNHYRVNELQAADRTLEQIVRFYLEKEKSTLFRQGVSSVDDNNKTLTNNFLSIKTEKPSANIIGIFTLGFHNQHDCRELKRLLNNLGIEINEVIPEGGSVKNLKNLPKAWFNIIPYREVGLMSAIYLEKEFNMPYVAVSPIGIIDTAVCIREIERILNKIYFESLEGNVNTQSVLTTNPYFNSHINSTNSETRDHNVKPFDFEFYIENQTRFISQAAWFSRSIDCQNLTGKKAVVFGDATHAAGITKILAREMGIKVVCSGTYCKHDADWFREQVFGFCDQILITDDHTQVGDMIAKLEPSAIFGTQMERHIGKRLDIPCGVISAPVHIQNFPLSYRPFLGYEGTNQIADLVYNSFSLGMEDHLLEIFSGHDTKEPITKSLSTENELNWDAEALKELSNVPGFVRGKVKRNTEKYARQNAIPSITLDVLFAAKEALSA</sequence>
<name>CHLB_CHLMO</name>
<keyword id="KW-0004">4Fe-4S</keyword>
<keyword id="KW-0067">ATP-binding</keyword>
<keyword id="KW-0149">Chlorophyll biosynthesis</keyword>
<keyword id="KW-0150">Chloroplast</keyword>
<keyword id="KW-0408">Iron</keyword>
<keyword id="KW-0411">Iron-sulfur</keyword>
<keyword id="KW-0479">Metal-binding</keyword>
<keyword id="KW-0547">Nucleotide-binding</keyword>
<keyword id="KW-0560">Oxidoreductase</keyword>
<keyword id="KW-0602">Photosynthesis</keyword>
<keyword id="KW-0934">Plastid</keyword>
<geneLocation type="chloroplast"/>
<dbReference type="EC" id="1.3.7.7" evidence="1"/>
<dbReference type="EMBL" id="X51398">
    <property type="protein sequence ID" value="CAA35763.1"/>
    <property type="molecule type" value="Genomic_DNA"/>
</dbReference>
<dbReference type="PIR" id="S10176">
    <property type="entry name" value="S10176"/>
</dbReference>
<dbReference type="SMR" id="P17652"/>
<dbReference type="UniPathway" id="UPA00670"/>
<dbReference type="GO" id="GO:0009507">
    <property type="term" value="C:chloroplast"/>
    <property type="evidence" value="ECO:0007669"/>
    <property type="project" value="UniProtKB-SubCell"/>
</dbReference>
<dbReference type="GO" id="GO:0051539">
    <property type="term" value="F:4 iron, 4 sulfur cluster binding"/>
    <property type="evidence" value="ECO:0007669"/>
    <property type="project" value="UniProtKB-UniRule"/>
</dbReference>
<dbReference type="GO" id="GO:0005524">
    <property type="term" value="F:ATP binding"/>
    <property type="evidence" value="ECO:0007669"/>
    <property type="project" value="UniProtKB-UniRule"/>
</dbReference>
<dbReference type="GO" id="GO:0046872">
    <property type="term" value="F:metal ion binding"/>
    <property type="evidence" value="ECO:0007669"/>
    <property type="project" value="UniProtKB-KW"/>
</dbReference>
<dbReference type="GO" id="GO:0016730">
    <property type="term" value="F:oxidoreductase activity, acting on iron-sulfur proteins as donors"/>
    <property type="evidence" value="ECO:0007669"/>
    <property type="project" value="InterPro"/>
</dbReference>
<dbReference type="GO" id="GO:0016636">
    <property type="term" value="F:oxidoreductase activity, acting on the CH-CH group of donors, iron-sulfur protein as acceptor"/>
    <property type="evidence" value="ECO:0007669"/>
    <property type="project" value="UniProtKB-UniRule"/>
</dbReference>
<dbReference type="GO" id="GO:0036068">
    <property type="term" value="P:light-independent chlorophyll biosynthetic process"/>
    <property type="evidence" value="ECO:0007669"/>
    <property type="project" value="UniProtKB-UniRule"/>
</dbReference>
<dbReference type="GO" id="GO:0019685">
    <property type="term" value="P:photosynthesis, dark reaction"/>
    <property type="evidence" value="ECO:0007669"/>
    <property type="project" value="InterPro"/>
</dbReference>
<dbReference type="CDD" id="cd01981">
    <property type="entry name" value="Pchlide_reductase_B"/>
    <property type="match status" value="1"/>
</dbReference>
<dbReference type="Gene3D" id="1.20.89.20">
    <property type="match status" value="1"/>
</dbReference>
<dbReference type="Gene3D" id="3.40.50.1980">
    <property type="entry name" value="Nitrogenase molybdenum iron protein domain"/>
    <property type="match status" value="3"/>
</dbReference>
<dbReference type="Gene3D" id="1.10.8.550">
    <property type="entry name" value="Proto-chlorophyllide reductase 57 kD subunit B"/>
    <property type="match status" value="1"/>
</dbReference>
<dbReference type="HAMAP" id="MF_00353">
    <property type="entry name" value="ChlB_BchB"/>
    <property type="match status" value="1"/>
</dbReference>
<dbReference type="InterPro" id="IPR050152">
    <property type="entry name" value="ChlB/BchB/BchZ"/>
</dbReference>
<dbReference type="InterPro" id="IPR013580">
    <property type="entry name" value="LI-POR_suB-like_C"/>
</dbReference>
<dbReference type="InterPro" id="IPR000510">
    <property type="entry name" value="Nase/OxRdtase_comp1"/>
</dbReference>
<dbReference type="InterPro" id="IPR042298">
    <property type="entry name" value="P-CP_red_C"/>
</dbReference>
<dbReference type="InterPro" id="IPR005969">
    <property type="entry name" value="Protochl_reductB"/>
</dbReference>
<dbReference type="InterPro" id="IPR016209">
    <property type="entry name" value="Protochlorophyllide_Rdtase"/>
</dbReference>
<dbReference type="NCBIfam" id="TIGR01278">
    <property type="entry name" value="DPOR_BchB"/>
    <property type="match status" value="1"/>
</dbReference>
<dbReference type="PANTHER" id="PTHR33712">
    <property type="entry name" value="LIGHT-INDEPENDENT PROTOCHLOROPHYLLIDE REDUCTASE SUBUNIT B"/>
    <property type="match status" value="1"/>
</dbReference>
<dbReference type="PANTHER" id="PTHR33712:SF7">
    <property type="entry name" value="LIGHT-INDEPENDENT PROTOCHLOROPHYLLIDE REDUCTASE SUBUNIT B"/>
    <property type="match status" value="1"/>
</dbReference>
<dbReference type="Pfam" id="PF00148">
    <property type="entry name" value="Oxidored_nitro"/>
    <property type="match status" value="1"/>
</dbReference>
<dbReference type="Pfam" id="PF08369">
    <property type="entry name" value="PCP_red"/>
    <property type="match status" value="1"/>
</dbReference>
<dbReference type="PIRSF" id="PIRSF000163">
    <property type="entry name" value="PCP_ChlB"/>
    <property type="match status" value="1"/>
</dbReference>
<dbReference type="SUPFAM" id="SSF53807">
    <property type="entry name" value="Helical backbone' metal receptor"/>
    <property type="match status" value="1"/>
</dbReference>
<proteinExistence type="inferred from homology"/>
<gene>
    <name evidence="1" type="primary">chlB</name>
</gene>
<feature type="chain" id="PRO_0000219814" description="Light-independent protochlorophyllide reductase subunit B">
    <location>
        <begin position="1"/>
        <end position="563"/>
    </location>
</feature>
<feature type="active site" description="Proton donor" evidence="1">
    <location>
        <position position="349"/>
    </location>
</feature>
<feature type="binding site" evidence="1">
    <location>
        <position position="36"/>
    </location>
    <ligand>
        <name>[4Fe-4S] cluster</name>
        <dbReference type="ChEBI" id="CHEBI:49883"/>
        <note>ligand shared with heterodimeric partner</note>
    </ligand>
</feature>
<feature type="binding site" evidence="1">
    <location>
        <begin position="484"/>
        <end position="485"/>
    </location>
    <ligand>
        <name>substrate</name>
    </ligand>
</feature>
<protein>
    <recommendedName>
        <fullName evidence="1">Light-independent protochlorophyllide reductase subunit B</fullName>
        <shortName evidence="1">DPOR subunit B</shortName>
        <shortName evidence="1">LI-POR subunit B</shortName>
        <ecNumber evidence="1">1.3.7.7</ecNumber>
    </recommendedName>
</protein>
<accession>P17652</accession>
<comment type="function">
    <text evidence="1">Component of the dark-operative protochlorophyllide reductase (DPOR) that uses Mg-ATP and reduced ferredoxin to reduce ring D of protochlorophyllide (Pchlide) to form chlorophyllide a (Chlide). This reaction is light-independent. The NB-protein (ChlN-ChlB) is the catalytic component of the complex.</text>
</comment>
<comment type="catalytic activity">
    <reaction evidence="1">
        <text>chlorophyllide a + oxidized 2[4Fe-4S]-[ferredoxin] + 2 ADP + 2 phosphate = protochlorophyllide a + reduced 2[4Fe-4S]-[ferredoxin] + 2 ATP + 2 H2O</text>
        <dbReference type="Rhea" id="RHEA:28202"/>
        <dbReference type="Rhea" id="RHEA-COMP:10002"/>
        <dbReference type="Rhea" id="RHEA-COMP:10004"/>
        <dbReference type="ChEBI" id="CHEBI:15377"/>
        <dbReference type="ChEBI" id="CHEBI:30616"/>
        <dbReference type="ChEBI" id="CHEBI:33722"/>
        <dbReference type="ChEBI" id="CHEBI:33723"/>
        <dbReference type="ChEBI" id="CHEBI:43474"/>
        <dbReference type="ChEBI" id="CHEBI:83348"/>
        <dbReference type="ChEBI" id="CHEBI:83350"/>
        <dbReference type="ChEBI" id="CHEBI:456216"/>
        <dbReference type="EC" id="1.3.7.7"/>
    </reaction>
</comment>
<comment type="cofactor">
    <cofactor evidence="1">
        <name>[4Fe-4S] cluster</name>
        <dbReference type="ChEBI" id="CHEBI:49883"/>
    </cofactor>
    <text evidence="1">Binds 1 [4Fe-4S] cluster per heterodimer. The cluster is bound at the heterodimer interface by residues from both subunits.</text>
</comment>
<comment type="pathway">
    <text evidence="1">Porphyrin-containing compound metabolism; chlorophyll biosynthesis (light-independent).</text>
</comment>
<comment type="subunit">
    <text evidence="1">Protochlorophyllide reductase is composed of three subunits; ChlL, ChlN and ChlB. Forms a heterotetramer of two ChlB and two ChlN subunits.</text>
</comment>
<comment type="subcellular location">
    <subcellularLocation>
        <location>Plastid</location>
        <location>Chloroplast</location>
    </subcellularLocation>
</comment>
<comment type="similarity">
    <text evidence="1">Belongs to the ChlB/BchB/BchZ family.</text>
</comment>
<evidence type="ECO:0000255" key="1">
    <source>
        <dbReference type="HAMAP-Rule" id="MF_00353"/>
    </source>
</evidence>
<reference key="1">
    <citation type="journal article" date="1990" name="Nucleic Acids Res.">
        <title>Nucleotide sequence of Chlamydomonas moewusii chloroplastic tRNA(thr).</title>
        <authorList>
            <person name="Richard M."/>
            <person name="Bellemare G."/>
        </authorList>
    </citation>
    <scope>NUCLEOTIDE SEQUENCE [GENOMIC DNA]</scope>
    <source>
        <strain>UTEX 97</strain>
    </source>
</reference>